<organism>
    <name type="scientific">Ruminiclostridium cellulolyticum (strain ATCC 35319 / DSM 5812 / JCM 6584 / H10)</name>
    <name type="common">Clostridium cellulolyticum</name>
    <dbReference type="NCBI Taxonomy" id="394503"/>
    <lineage>
        <taxon>Bacteria</taxon>
        <taxon>Bacillati</taxon>
        <taxon>Bacillota</taxon>
        <taxon>Clostridia</taxon>
        <taxon>Eubacteriales</taxon>
        <taxon>Oscillospiraceae</taxon>
        <taxon>Ruminiclostridium</taxon>
    </lineage>
</organism>
<accession>B8I8F5</accession>
<proteinExistence type="inferred from homology"/>
<protein>
    <recommendedName>
        <fullName evidence="1">ATP-dependent Clp protease proteolytic subunit</fullName>
        <ecNumber evidence="1">3.4.21.92</ecNumber>
    </recommendedName>
    <alternativeName>
        <fullName evidence="1">Endopeptidase Clp</fullName>
    </alternativeName>
</protein>
<name>CLPP_RUMCH</name>
<evidence type="ECO:0000255" key="1">
    <source>
        <dbReference type="HAMAP-Rule" id="MF_00444"/>
    </source>
</evidence>
<reference key="1">
    <citation type="submission" date="2009-01" db="EMBL/GenBank/DDBJ databases">
        <title>Complete sequence of Clostridium cellulolyticum H10.</title>
        <authorList>
            <consortium name="US DOE Joint Genome Institute"/>
            <person name="Lucas S."/>
            <person name="Copeland A."/>
            <person name="Lapidus A."/>
            <person name="Glavina del Rio T."/>
            <person name="Dalin E."/>
            <person name="Tice H."/>
            <person name="Bruce D."/>
            <person name="Goodwin L."/>
            <person name="Pitluck S."/>
            <person name="Chertkov O."/>
            <person name="Saunders E."/>
            <person name="Brettin T."/>
            <person name="Detter J.C."/>
            <person name="Han C."/>
            <person name="Larimer F."/>
            <person name="Land M."/>
            <person name="Hauser L."/>
            <person name="Kyrpides N."/>
            <person name="Ivanova N."/>
            <person name="Zhou J."/>
            <person name="Richardson P."/>
        </authorList>
    </citation>
    <scope>NUCLEOTIDE SEQUENCE [LARGE SCALE GENOMIC DNA]</scope>
    <source>
        <strain>ATCC 35319 / DSM 5812 / JCM 6584 / H10</strain>
    </source>
</reference>
<feature type="chain" id="PRO_1000135151" description="ATP-dependent Clp protease proteolytic subunit">
    <location>
        <begin position="1"/>
        <end position="194"/>
    </location>
</feature>
<feature type="active site" description="Nucleophile" evidence="1">
    <location>
        <position position="98"/>
    </location>
</feature>
<feature type="active site" evidence="1">
    <location>
        <position position="123"/>
    </location>
</feature>
<sequence>MSLVPMVVEQTNRGERSYDIFSRLLNDRIIVLSDEVNDATASLIVAQMLYLEAQDPDKDIQFYINSPGGSVASGFAIYDTMQYVKCDVSTICMGMAASMGAFLLAAGEKGKRFALPNSEIMIHQPLGGARGQATDIKIHAENILRTRDKLNKILSERTGQPLDKIEKDTERDFFMSADEAKAYGIIDDIMVRRK</sequence>
<keyword id="KW-0963">Cytoplasm</keyword>
<keyword id="KW-0378">Hydrolase</keyword>
<keyword id="KW-0645">Protease</keyword>
<keyword id="KW-1185">Reference proteome</keyword>
<keyword id="KW-0720">Serine protease</keyword>
<gene>
    <name evidence="1" type="primary">clpP</name>
    <name type="ordered locus">Ccel_0810</name>
</gene>
<comment type="function">
    <text evidence="1">Cleaves peptides in various proteins in a process that requires ATP hydrolysis. Has a chymotrypsin-like activity. Plays a major role in the degradation of misfolded proteins.</text>
</comment>
<comment type="catalytic activity">
    <reaction evidence="1">
        <text>Hydrolysis of proteins to small peptides in the presence of ATP and magnesium. alpha-casein is the usual test substrate. In the absence of ATP, only oligopeptides shorter than five residues are hydrolyzed (such as succinyl-Leu-Tyr-|-NHMec, and Leu-Tyr-Leu-|-Tyr-Trp, in which cleavage of the -Tyr-|-Leu- and -Tyr-|-Trp bonds also occurs).</text>
        <dbReference type="EC" id="3.4.21.92"/>
    </reaction>
</comment>
<comment type="subunit">
    <text evidence="1">Fourteen ClpP subunits assemble into 2 heptameric rings which stack back to back to give a disk-like structure with a central cavity, resembling the structure of eukaryotic proteasomes.</text>
</comment>
<comment type="subcellular location">
    <subcellularLocation>
        <location evidence="1">Cytoplasm</location>
    </subcellularLocation>
</comment>
<comment type="similarity">
    <text evidence="1">Belongs to the peptidase S14 family.</text>
</comment>
<dbReference type="EC" id="3.4.21.92" evidence="1"/>
<dbReference type="EMBL" id="CP001348">
    <property type="protein sequence ID" value="ACL75188.1"/>
    <property type="molecule type" value="Genomic_DNA"/>
</dbReference>
<dbReference type="RefSeq" id="WP_015924350.1">
    <property type="nucleotide sequence ID" value="NC_011898.1"/>
</dbReference>
<dbReference type="SMR" id="B8I8F5"/>
<dbReference type="STRING" id="394503.Ccel_0810"/>
<dbReference type="MEROPS" id="S14.001"/>
<dbReference type="KEGG" id="cce:Ccel_0810"/>
<dbReference type="eggNOG" id="COG0740">
    <property type="taxonomic scope" value="Bacteria"/>
</dbReference>
<dbReference type="HOGENOM" id="CLU_058707_3_2_9"/>
<dbReference type="OrthoDB" id="9802800at2"/>
<dbReference type="Proteomes" id="UP000001349">
    <property type="component" value="Chromosome"/>
</dbReference>
<dbReference type="GO" id="GO:0005737">
    <property type="term" value="C:cytoplasm"/>
    <property type="evidence" value="ECO:0007669"/>
    <property type="project" value="UniProtKB-SubCell"/>
</dbReference>
<dbReference type="GO" id="GO:0009368">
    <property type="term" value="C:endopeptidase Clp complex"/>
    <property type="evidence" value="ECO:0007669"/>
    <property type="project" value="TreeGrafter"/>
</dbReference>
<dbReference type="GO" id="GO:0004176">
    <property type="term" value="F:ATP-dependent peptidase activity"/>
    <property type="evidence" value="ECO:0007669"/>
    <property type="project" value="InterPro"/>
</dbReference>
<dbReference type="GO" id="GO:0051117">
    <property type="term" value="F:ATPase binding"/>
    <property type="evidence" value="ECO:0007669"/>
    <property type="project" value="TreeGrafter"/>
</dbReference>
<dbReference type="GO" id="GO:0004252">
    <property type="term" value="F:serine-type endopeptidase activity"/>
    <property type="evidence" value="ECO:0007669"/>
    <property type="project" value="UniProtKB-UniRule"/>
</dbReference>
<dbReference type="GO" id="GO:0006515">
    <property type="term" value="P:protein quality control for misfolded or incompletely synthesized proteins"/>
    <property type="evidence" value="ECO:0007669"/>
    <property type="project" value="TreeGrafter"/>
</dbReference>
<dbReference type="CDD" id="cd07017">
    <property type="entry name" value="S14_ClpP_2"/>
    <property type="match status" value="1"/>
</dbReference>
<dbReference type="FunFam" id="3.90.226.10:FF:000001">
    <property type="entry name" value="ATP-dependent Clp protease proteolytic subunit"/>
    <property type="match status" value="1"/>
</dbReference>
<dbReference type="Gene3D" id="3.90.226.10">
    <property type="entry name" value="2-enoyl-CoA Hydratase, Chain A, domain 1"/>
    <property type="match status" value="1"/>
</dbReference>
<dbReference type="HAMAP" id="MF_00444">
    <property type="entry name" value="ClpP"/>
    <property type="match status" value="1"/>
</dbReference>
<dbReference type="InterPro" id="IPR001907">
    <property type="entry name" value="ClpP"/>
</dbReference>
<dbReference type="InterPro" id="IPR029045">
    <property type="entry name" value="ClpP/crotonase-like_dom_sf"/>
</dbReference>
<dbReference type="InterPro" id="IPR023562">
    <property type="entry name" value="ClpP/TepA"/>
</dbReference>
<dbReference type="InterPro" id="IPR033135">
    <property type="entry name" value="ClpP_His_AS"/>
</dbReference>
<dbReference type="InterPro" id="IPR018215">
    <property type="entry name" value="ClpP_Ser_AS"/>
</dbReference>
<dbReference type="NCBIfam" id="TIGR00493">
    <property type="entry name" value="clpP"/>
    <property type="match status" value="1"/>
</dbReference>
<dbReference type="NCBIfam" id="NF001368">
    <property type="entry name" value="PRK00277.1"/>
    <property type="match status" value="1"/>
</dbReference>
<dbReference type="NCBIfam" id="NF009205">
    <property type="entry name" value="PRK12553.1"/>
    <property type="match status" value="1"/>
</dbReference>
<dbReference type="PANTHER" id="PTHR10381">
    <property type="entry name" value="ATP-DEPENDENT CLP PROTEASE PROTEOLYTIC SUBUNIT"/>
    <property type="match status" value="1"/>
</dbReference>
<dbReference type="PANTHER" id="PTHR10381:SF70">
    <property type="entry name" value="ATP-DEPENDENT CLP PROTEASE PROTEOLYTIC SUBUNIT"/>
    <property type="match status" value="1"/>
</dbReference>
<dbReference type="Pfam" id="PF00574">
    <property type="entry name" value="CLP_protease"/>
    <property type="match status" value="1"/>
</dbReference>
<dbReference type="PRINTS" id="PR00127">
    <property type="entry name" value="CLPPROTEASEP"/>
</dbReference>
<dbReference type="SUPFAM" id="SSF52096">
    <property type="entry name" value="ClpP/crotonase"/>
    <property type="match status" value="1"/>
</dbReference>
<dbReference type="PROSITE" id="PS00382">
    <property type="entry name" value="CLP_PROTEASE_HIS"/>
    <property type="match status" value="1"/>
</dbReference>
<dbReference type="PROSITE" id="PS00381">
    <property type="entry name" value="CLP_PROTEASE_SER"/>
    <property type="match status" value="1"/>
</dbReference>